<comment type="function">
    <text evidence="1">Sulfur carrier protein involved in sulfur trafficking in the cell. Part of a sulfur-relay system required for 2-thiolation during synthesis of 2-thiouridine of the modified wobble base 5-methylaminomethyl-2-thiouridine (mnm(5)s(2)U) in tRNA. Interacts with IscS and stimulates its cysteine desulfurase activity. Accepts an activated sulfur from IscS, which is then transferred to TusD, and thus determines the direction of sulfur flow from IscS to 2-thiouridine formation. Also appears to be involved in sulfur transfer for the biosynthesis of molybdopterin.</text>
</comment>
<comment type="pathway">
    <text evidence="1">tRNA modification.</text>
</comment>
<comment type="subunit">
    <text evidence="1">Interacts with IscS.</text>
</comment>
<comment type="subcellular location">
    <subcellularLocation>
        <location evidence="1">Cytoplasm</location>
    </subcellularLocation>
</comment>
<comment type="similarity">
    <text evidence="1">Belongs to the sulfur carrier protein TusA family.</text>
</comment>
<accession>B2U4C2</accession>
<gene>
    <name evidence="1" type="primary">tusA</name>
    <name type="ordered locus">SbBS512_E3852</name>
</gene>
<organism>
    <name type="scientific">Shigella boydii serotype 18 (strain CDC 3083-94 / BS512)</name>
    <dbReference type="NCBI Taxonomy" id="344609"/>
    <lineage>
        <taxon>Bacteria</taxon>
        <taxon>Pseudomonadati</taxon>
        <taxon>Pseudomonadota</taxon>
        <taxon>Gammaproteobacteria</taxon>
        <taxon>Enterobacterales</taxon>
        <taxon>Enterobacteriaceae</taxon>
        <taxon>Shigella</taxon>
    </lineage>
</organism>
<dbReference type="EMBL" id="CP001063">
    <property type="protein sequence ID" value="ACD09295.1"/>
    <property type="molecule type" value="Genomic_DNA"/>
</dbReference>
<dbReference type="RefSeq" id="WP_000130621.1">
    <property type="nucleotide sequence ID" value="NC_010658.1"/>
</dbReference>
<dbReference type="SMR" id="B2U4C2"/>
<dbReference type="STRING" id="344609.SbBS512_E3852"/>
<dbReference type="GeneID" id="93778521"/>
<dbReference type="KEGG" id="sbc:SbBS512_E3852"/>
<dbReference type="HOGENOM" id="CLU_165255_5_0_6"/>
<dbReference type="Proteomes" id="UP000001030">
    <property type="component" value="Chromosome"/>
</dbReference>
<dbReference type="GO" id="GO:0005737">
    <property type="term" value="C:cytoplasm"/>
    <property type="evidence" value="ECO:0007669"/>
    <property type="project" value="UniProtKB-SubCell"/>
</dbReference>
<dbReference type="GO" id="GO:0097163">
    <property type="term" value="F:sulfur carrier activity"/>
    <property type="evidence" value="ECO:0007669"/>
    <property type="project" value="UniProtKB-UniRule"/>
</dbReference>
<dbReference type="GO" id="GO:0002143">
    <property type="term" value="P:tRNA wobble position uridine thiolation"/>
    <property type="evidence" value="ECO:0007669"/>
    <property type="project" value="InterPro"/>
</dbReference>
<dbReference type="CDD" id="cd03423">
    <property type="entry name" value="SirA"/>
    <property type="match status" value="1"/>
</dbReference>
<dbReference type="FunFam" id="3.30.110.40:FF:000002">
    <property type="entry name" value="Sulfur carrier protein TusA"/>
    <property type="match status" value="1"/>
</dbReference>
<dbReference type="Gene3D" id="3.30.110.40">
    <property type="entry name" value="TusA-like domain"/>
    <property type="match status" value="1"/>
</dbReference>
<dbReference type="HAMAP" id="MF_00413">
    <property type="entry name" value="Thiourid_synth_A"/>
    <property type="match status" value="1"/>
</dbReference>
<dbReference type="InterPro" id="IPR022931">
    <property type="entry name" value="Sulphur_carrier_TusA"/>
</dbReference>
<dbReference type="InterPro" id="IPR001455">
    <property type="entry name" value="TusA-like"/>
</dbReference>
<dbReference type="InterPro" id="IPR036868">
    <property type="entry name" value="TusA-like_sf"/>
</dbReference>
<dbReference type="NCBIfam" id="NF001423">
    <property type="entry name" value="PRK00299.1"/>
    <property type="match status" value="1"/>
</dbReference>
<dbReference type="PANTHER" id="PTHR33279:SF2">
    <property type="entry name" value="SULFUR CARRIER PROTEIN TUSA"/>
    <property type="match status" value="1"/>
</dbReference>
<dbReference type="PANTHER" id="PTHR33279">
    <property type="entry name" value="SULFUR CARRIER PROTEIN YEDF-RELATED"/>
    <property type="match status" value="1"/>
</dbReference>
<dbReference type="Pfam" id="PF01206">
    <property type="entry name" value="TusA"/>
    <property type="match status" value="1"/>
</dbReference>
<dbReference type="SUPFAM" id="SSF64307">
    <property type="entry name" value="SirA-like"/>
    <property type="match status" value="1"/>
</dbReference>
<dbReference type="PROSITE" id="PS01148">
    <property type="entry name" value="UPF0033"/>
    <property type="match status" value="1"/>
</dbReference>
<evidence type="ECO:0000255" key="1">
    <source>
        <dbReference type="HAMAP-Rule" id="MF_00413"/>
    </source>
</evidence>
<feature type="chain" id="PRO_1000199934" description="Sulfur carrier protein TusA">
    <location>
        <begin position="1"/>
        <end position="81"/>
    </location>
</feature>
<feature type="active site" description="Cysteine persulfide intermediate" evidence="1">
    <location>
        <position position="19"/>
    </location>
</feature>
<sequence length="81" mass="9095">MTDLFSSPDHTLDALGLRCPEPVMMVRKTVRNMQPGETLLIIADDPATTRDIPGFCTFMEHELVAKETDGLPYRYLIRKGG</sequence>
<protein>
    <recommendedName>
        <fullName evidence="1">Sulfur carrier protein TusA</fullName>
    </recommendedName>
    <alternativeName>
        <fullName evidence="1">Sulfur mediator TusA</fullName>
    </alternativeName>
    <alternativeName>
        <fullName evidence="1">Sulfur transfer protein TusA</fullName>
    </alternativeName>
    <alternativeName>
        <fullName evidence="1">tRNA 2-thiouridine synthesizing protein A</fullName>
    </alternativeName>
</protein>
<proteinExistence type="inferred from homology"/>
<name>TUSA_SHIB3</name>
<keyword id="KW-0963">Cytoplasm</keyword>
<keyword id="KW-1185">Reference proteome</keyword>
<keyword id="KW-0819">tRNA processing</keyword>
<reference key="1">
    <citation type="submission" date="2008-05" db="EMBL/GenBank/DDBJ databases">
        <title>Complete sequence of Shigella boydii serotype 18 strain BS512.</title>
        <authorList>
            <person name="Rasko D.A."/>
            <person name="Rosovitz M."/>
            <person name="Maurelli A.T."/>
            <person name="Myers G."/>
            <person name="Seshadri R."/>
            <person name="Cer R."/>
            <person name="Jiang L."/>
            <person name="Ravel J."/>
            <person name="Sebastian Y."/>
        </authorList>
    </citation>
    <scope>NUCLEOTIDE SEQUENCE [LARGE SCALE GENOMIC DNA]</scope>
    <source>
        <strain>CDC 3083-94 / BS512</strain>
    </source>
</reference>